<evidence type="ECO:0000255" key="1">
    <source>
        <dbReference type="HAMAP-Rule" id="MF_00037"/>
    </source>
</evidence>
<protein>
    <recommendedName>
        <fullName evidence="1">UDP-N-acetylenolpyruvoylglucosamine reductase</fullName>
        <ecNumber evidence="1">1.3.1.98</ecNumber>
    </recommendedName>
    <alternativeName>
        <fullName evidence="1">UDP-N-acetylmuramate dehydrogenase</fullName>
    </alternativeName>
</protein>
<sequence length="309" mass="32698">MTAHSLIDAIRAAAPDLRGRLLENQSLADLTWFRVGGPAQVLFSPADEADLSAFLAALDPAVPVTVIGLGSNLIVRDGGIPGVAIRLGGKAFGSVEIDGETIRSGTAVPDMRLAKAAAEASLDGLAFFRGIPGSVGGALRMNAGAHGGETTDVLVEVRGIDRKGEVRRFTHAEMGFRYRHSSAPDDVIFTGATFRGRPGNREAIEAEMERVTAAREAAQPIRERTGGSTFKNPEGGKAWQLIDAAGCRGLIRGGAQVSEMHCNFLINRGGATAADIEGLGEEVRRRVRDHSGFELHWEIKRIGVEASPA</sequence>
<reference key="1">
    <citation type="submission" date="2007-12" db="EMBL/GenBank/DDBJ databases">
        <title>Complete sequence of Methylobacterium extorquens PA1.</title>
        <authorList>
            <consortium name="US DOE Joint Genome Institute"/>
            <person name="Copeland A."/>
            <person name="Lucas S."/>
            <person name="Lapidus A."/>
            <person name="Barry K."/>
            <person name="Glavina del Rio T."/>
            <person name="Dalin E."/>
            <person name="Tice H."/>
            <person name="Pitluck S."/>
            <person name="Saunders E."/>
            <person name="Brettin T."/>
            <person name="Bruce D."/>
            <person name="Detter J.C."/>
            <person name="Han C."/>
            <person name="Schmutz J."/>
            <person name="Larimer F."/>
            <person name="Land M."/>
            <person name="Hauser L."/>
            <person name="Kyrpides N."/>
            <person name="Kim E."/>
            <person name="Marx C."/>
            <person name="Richardson P."/>
        </authorList>
    </citation>
    <scope>NUCLEOTIDE SEQUENCE [LARGE SCALE GENOMIC DNA]</scope>
    <source>
        <strain>PA1</strain>
    </source>
</reference>
<dbReference type="EC" id="1.3.1.98" evidence="1"/>
<dbReference type="EMBL" id="CP000908">
    <property type="protein sequence ID" value="ABY31334.1"/>
    <property type="molecule type" value="Genomic_DNA"/>
</dbReference>
<dbReference type="RefSeq" id="WP_012254275.1">
    <property type="nucleotide sequence ID" value="NC_010172.1"/>
</dbReference>
<dbReference type="SMR" id="A9VWV7"/>
<dbReference type="KEGG" id="mex:Mext_2945"/>
<dbReference type="eggNOG" id="COG0812">
    <property type="taxonomic scope" value="Bacteria"/>
</dbReference>
<dbReference type="HOGENOM" id="CLU_035304_1_0_5"/>
<dbReference type="BioCyc" id="MEXT419610:MEXT_RS14835-MONOMER"/>
<dbReference type="UniPathway" id="UPA00219"/>
<dbReference type="GO" id="GO:0005829">
    <property type="term" value="C:cytosol"/>
    <property type="evidence" value="ECO:0007669"/>
    <property type="project" value="TreeGrafter"/>
</dbReference>
<dbReference type="GO" id="GO:0071949">
    <property type="term" value="F:FAD binding"/>
    <property type="evidence" value="ECO:0007669"/>
    <property type="project" value="InterPro"/>
</dbReference>
<dbReference type="GO" id="GO:0008762">
    <property type="term" value="F:UDP-N-acetylmuramate dehydrogenase activity"/>
    <property type="evidence" value="ECO:0007669"/>
    <property type="project" value="UniProtKB-UniRule"/>
</dbReference>
<dbReference type="GO" id="GO:0051301">
    <property type="term" value="P:cell division"/>
    <property type="evidence" value="ECO:0007669"/>
    <property type="project" value="UniProtKB-KW"/>
</dbReference>
<dbReference type="GO" id="GO:0071555">
    <property type="term" value="P:cell wall organization"/>
    <property type="evidence" value="ECO:0007669"/>
    <property type="project" value="UniProtKB-KW"/>
</dbReference>
<dbReference type="GO" id="GO:0009252">
    <property type="term" value="P:peptidoglycan biosynthetic process"/>
    <property type="evidence" value="ECO:0007669"/>
    <property type="project" value="UniProtKB-UniRule"/>
</dbReference>
<dbReference type="GO" id="GO:0008360">
    <property type="term" value="P:regulation of cell shape"/>
    <property type="evidence" value="ECO:0007669"/>
    <property type="project" value="UniProtKB-KW"/>
</dbReference>
<dbReference type="Gene3D" id="3.30.465.10">
    <property type="match status" value="1"/>
</dbReference>
<dbReference type="Gene3D" id="3.90.78.10">
    <property type="entry name" value="UDP-N-acetylenolpyruvoylglucosamine reductase, C-terminal domain"/>
    <property type="match status" value="1"/>
</dbReference>
<dbReference type="Gene3D" id="3.30.43.10">
    <property type="entry name" value="Uridine Diphospho-n-acetylenolpyruvylglucosamine Reductase, domain 2"/>
    <property type="match status" value="1"/>
</dbReference>
<dbReference type="HAMAP" id="MF_00037">
    <property type="entry name" value="MurB"/>
    <property type="match status" value="1"/>
</dbReference>
<dbReference type="InterPro" id="IPR016166">
    <property type="entry name" value="FAD-bd_PCMH"/>
</dbReference>
<dbReference type="InterPro" id="IPR036318">
    <property type="entry name" value="FAD-bd_PCMH-like_sf"/>
</dbReference>
<dbReference type="InterPro" id="IPR016167">
    <property type="entry name" value="FAD-bd_PCMH_sub1"/>
</dbReference>
<dbReference type="InterPro" id="IPR016169">
    <property type="entry name" value="FAD-bd_PCMH_sub2"/>
</dbReference>
<dbReference type="InterPro" id="IPR003170">
    <property type="entry name" value="MurB"/>
</dbReference>
<dbReference type="InterPro" id="IPR011601">
    <property type="entry name" value="MurB_C"/>
</dbReference>
<dbReference type="InterPro" id="IPR036635">
    <property type="entry name" value="MurB_C_sf"/>
</dbReference>
<dbReference type="InterPro" id="IPR006094">
    <property type="entry name" value="Oxid_FAD_bind_N"/>
</dbReference>
<dbReference type="NCBIfam" id="TIGR00179">
    <property type="entry name" value="murB"/>
    <property type="match status" value="1"/>
</dbReference>
<dbReference type="NCBIfam" id="NF010480">
    <property type="entry name" value="PRK13905.1"/>
    <property type="match status" value="1"/>
</dbReference>
<dbReference type="PANTHER" id="PTHR21071">
    <property type="entry name" value="UDP-N-ACETYLENOLPYRUVOYLGLUCOSAMINE REDUCTASE"/>
    <property type="match status" value="1"/>
</dbReference>
<dbReference type="PANTHER" id="PTHR21071:SF4">
    <property type="entry name" value="UDP-N-ACETYLENOLPYRUVOYLGLUCOSAMINE REDUCTASE"/>
    <property type="match status" value="1"/>
</dbReference>
<dbReference type="Pfam" id="PF01565">
    <property type="entry name" value="FAD_binding_4"/>
    <property type="match status" value="1"/>
</dbReference>
<dbReference type="Pfam" id="PF02873">
    <property type="entry name" value="MurB_C"/>
    <property type="match status" value="1"/>
</dbReference>
<dbReference type="SUPFAM" id="SSF56176">
    <property type="entry name" value="FAD-binding/transporter-associated domain-like"/>
    <property type="match status" value="1"/>
</dbReference>
<dbReference type="SUPFAM" id="SSF56194">
    <property type="entry name" value="Uridine diphospho-N-Acetylenolpyruvylglucosamine reductase, MurB, C-terminal domain"/>
    <property type="match status" value="1"/>
</dbReference>
<dbReference type="PROSITE" id="PS51387">
    <property type="entry name" value="FAD_PCMH"/>
    <property type="match status" value="1"/>
</dbReference>
<gene>
    <name evidence="1" type="primary">murB</name>
    <name type="ordered locus">Mext_2945</name>
</gene>
<accession>A9VWV7</accession>
<proteinExistence type="inferred from homology"/>
<feature type="chain" id="PRO_1000191431" description="UDP-N-acetylenolpyruvoylglucosamine reductase">
    <location>
        <begin position="1"/>
        <end position="309"/>
    </location>
</feature>
<feature type="domain" description="FAD-binding PCMH-type" evidence="1">
    <location>
        <begin position="34"/>
        <end position="221"/>
    </location>
</feature>
<feature type="active site" evidence="1">
    <location>
        <position position="179"/>
    </location>
</feature>
<feature type="active site" description="Proton donor" evidence="1">
    <location>
        <position position="228"/>
    </location>
</feature>
<feature type="active site" evidence="1">
    <location>
        <position position="298"/>
    </location>
</feature>
<name>MURB_METEP</name>
<comment type="function">
    <text evidence="1">Cell wall formation.</text>
</comment>
<comment type="catalytic activity">
    <reaction evidence="1">
        <text>UDP-N-acetyl-alpha-D-muramate + NADP(+) = UDP-N-acetyl-3-O-(1-carboxyvinyl)-alpha-D-glucosamine + NADPH + H(+)</text>
        <dbReference type="Rhea" id="RHEA:12248"/>
        <dbReference type="ChEBI" id="CHEBI:15378"/>
        <dbReference type="ChEBI" id="CHEBI:57783"/>
        <dbReference type="ChEBI" id="CHEBI:58349"/>
        <dbReference type="ChEBI" id="CHEBI:68483"/>
        <dbReference type="ChEBI" id="CHEBI:70757"/>
        <dbReference type="EC" id="1.3.1.98"/>
    </reaction>
</comment>
<comment type="cofactor">
    <cofactor evidence="1">
        <name>FAD</name>
        <dbReference type="ChEBI" id="CHEBI:57692"/>
    </cofactor>
</comment>
<comment type="pathway">
    <text evidence="1">Cell wall biogenesis; peptidoglycan biosynthesis.</text>
</comment>
<comment type="subcellular location">
    <subcellularLocation>
        <location evidence="1">Cytoplasm</location>
    </subcellularLocation>
</comment>
<comment type="similarity">
    <text evidence="1">Belongs to the MurB family.</text>
</comment>
<keyword id="KW-0131">Cell cycle</keyword>
<keyword id="KW-0132">Cell division</keyword>
<keyword id="KW-0133">Cell shape</keyword>
<keyword id="KW-0961">Cell wall biogenesis/degradation</keyword>
<keyword id="KW-0963">Cytoplasm</keyword>
<keyword id="KW-0274">FAD</keyword>
<keyword id="KW-0285">Flavoprotein</keyword>
<keyword id="KW-0521">NADP</keyword>
<keyword id="KW-0560">Oxidoreductase</keyword>
<keyword id="KW-0573">Peptidoglycan synthesis</keyword>
<organism>
    <name type="scientific">Methylorubrum extorquens (strain PA1)</name>
    <name type="common">Methylobacterium extorquens</name>
    <dbReference type="NCBI Taxonomy" id="419610"/>
    <lineage>
        <taxon>Bacteria</taxon>
        <taxon>Pseudomonadati</taxon>
        <taxon>Pseudomonadota</taxon>
        <taxon>Alphaproteobacteria</taxon>
        <taxon>Hyphomicrobiales</taxon>
        <taxon>Methylobacteriaceae</taxon>
        <taxon>Methylorubrum</taxon>
    </lineage>
</organism>